<proteinExistence type="inferred from homology"/>
<feature type="signal peptide" evidence="1">
    <location>
        <begin position="1"/>
        <end position="20"/>
    </location>
</feature>
<feature type="chain" id="PRO_0000312428" description="Ponticulin-like protein F">
    <location>
        <begin position="21"/>
        <end position="149"/>
    </location>
</feature>
<feature type="propeptide" id="PRO_0000312429" description="Removed in mature form" evidence="1">
    <location>
        <begin position="150"/>
        <end position="171"/>
    </location>
</feature>
<feature type="lipid moiety-binding region" description="GPI-like-anchor amidated glycine" evidence="1">
    <location>
        <position position="149"/>
    </location>
</feature>
<evidence type="ECO:0000255" key="1"/>
<evidence type="ECO:0000305" key="2"/>
<organism>
    <name type="scientific">Dictyostelium discoideum</name>
    <name type="common">Social amoeba</name>
    <dbReference type="NCBI Taxonomy" id="44689"/>
    <lineage>
        <taxon>Eukaryota</taxon>
        <taxon>Amoebozoa</taxon>
        <taxon>Evosea</taxon>
        <taxon>Eumycetozoa</taxon>
        <taxon>Dictyostelia</taxon>
        <taxon>Dictyosteliales</taxon>
        <taxon>Dictyosteliaceae</taxon>
        <taxon>Dictyostelium</taxon>
    </lineage>
</organism>
<protein>
    <recommendedName>
        <fullName>Ponticulin-like protein F</fullName>
    </recommendedName>
</protein>
<comment type="subcellular location">
    <subcellularLocation>
        <location evidence="2">Cell membrane</location>
        <topology evidence="2">Lipid-anchor</topology>
        <topology evidence="2">GPI-anchor</topology>
    </subcellularLocation>
</comment>
<comment type="PTM">
    <text evidence="2">The GPI-like-anchor contains a phosphoceramide group, rather than a phosphatidyl group.</text>
</comment>
<comment type="similarity">
    <text evidence="2">Belongs to the ponticulin family.</text>
</comment>
<comment type="caution">
    <text evidence="2">The Dictyosteliida are known to produce a glycosylsphingolipidinositol anchor (GPI-like-anchor). It has not been established whether Dictyosteliida make a glycosylphosphatidylinositol anchor (GPI-anchor) also, and whether their GPI-like-anchor modifications can be interconverted with GPI-anchor modifications in a resculpting process. It has not been established that the GPI-like-anchor modification in Dictyosteliida utilizes the same sequence motif.</text>
</comment>
<gene>
    <name type="primary">ponF</name>
    <name type="ORF">DDB_G0286631</name>
</gene>
<name>PONF_DICDI</name>
<accession>Q54LH6</accession>
<reference key="1">
    <citation type="journal article" date="2005" name="Nature">
        <title>The genome of the social amoeba Dictyostelium discoideum.</title>
        <authorList>
            <person name="Eichinger L."/>
            <person name="Pachebat J.A."/>
            <person name="Gloeckner G."/>
            <person name="Rajandream M.A."/>
            <person name="Sucgang R."/>
            <person name="Berriman M."/>
            <person name="Song J."/>
            <person name="Olsen R."/>
            <person name="Szafranski K."/>
            <person name="Xu Q."/>
            <person name="Tunggal B."/>
            <person name="Kummerfeld S."/>
            <person name="Madera M."/>
            <person name="Konfortov B.A."/>
            <person name="Rivero F."/>
            <person name="Bankier A.T."/>
            <person name="Lehmann R."/>
            <person name="Hamlin N."/>
            <person name="Davies R."/>
            <person name="Gaudet P."/>
            <person name="Fey P."/>
            <person name="Pilcher K."/>
            <person name="Chen G."/>
            <person name="Saunders D."/>
            <person name="Sodergren E.J."/>
            <person name="Davis P."/>
            <person name="Kerhornou A."/>
            <person name="Nie X."/>
            <person name="Hall N."/>
            <person name="Anjard C."/>
            <person name="Hemphill L."/>
            <person name="Bason N."/>
            <person name="Farbrother P."/>
            <person name="Desany B."/>
            <person name="Just E."/>
            <person name="Morio T."/>
            <person name="Rost R."/>
            <person name="Churcher C.M."/>
            <person name="Cooper J."/>
            <person name="Haydock S."/>
            <person name="van Driessche N."/>
            <person name="Cronin A."/>
            <person name="Goodhead I."/>
            <person name="Muzny D.M."/>
            <person name="Mourier T."/>
            <person name="Pain A."/>
            <person name="Lu M."/>
            <person name="Harper D."/>
            <person name="Lindsay R."/>
            <person name="Hauser H."/>
            <person name="James K.D."/>
            <person name="Quiles M."/>
            <person name="Madan Babu M."/>
            <person name="Saito T."/>
            <person name="Buchrieser C."/>
            <person name="Wardroper A."/>
            <person name="Felder M."/>
            <person name="Thangavelu M."/>
            <person name="Johnson D."/>
            <person name="Knights A."/>
            <person name="Loulseged H."/>
            <person name="Mungall K.L."/>
            <person name="Oliver K."/>
            <person name="Price C."/>
            <person name="Quail M.A."/>
            <person name="Urushihara H."/>
            <person name="Hernandez J."/>
            <person name="Rabbinowitsch E."/>
            <person name="Steffen D."/>
            <person name="Sanders M."/>
            <person name="Ma J."/>
            <person name="Kohara Y."/>
            <person name="Sharp S."/>
            <person name="Simmonds M.N."/>
            <person name="Spiegler S."/>
            <person name="Tivey A."/>
            <person name="Sugano S."/>
            <person name="White B."/>
            <person name="Walker D."/>
            <person name="Woodward J.R."/>
            <person name="Winckler T."/>
            <person name="Tanaka Y."/>
            <person name="Shaulsky G."/>
            <person name="Schleicher M."/>
            <person name="Weinstock G.M."/>
            <person name="Rosenthal A."/>
            <person name="Cox E.C."/>
            <person name="Chisholm R.L."/>
            <person name="Gibbs R.A."/>
            <person name="Loomis W.F."/>
            <person name="Platzer M."/>
            <person name="Kay R.R."/>
            <person name="Williams J.G."/>
            <person name="Dear P.H."/>
            <person name="Noegel A.A."/>
            <person name="Barrell B.G."/>
            <person name="Kuspa A."/>
        </authorList>
    </citation>
    <scope>NUCLEOTIDE SEQUENCE [LARGE SCALE GENOMIC DNA]</scope>
    <source>
        <strain>AX4</strain>
    </source>
</reference>
<reference key="2">
    <citation type="journal article" date="2008" name="Langmuir">
        <title>Minimal F-actin cytoskeletal system for planar supported phospholipid bilayers.</title>
        <authorList>
            <person name="Barfoot R.J."/>
            <person name="Sheikh K.H."/>
            <person name="Johnson B.R."/>
            <person name="Colyer J."/>
            <person name="Miles R.E."/>
            <person name="Jeuken L.J."/>
            <person name="Bushby R.J."/>
            <person name="Evans S.D."/>
        </authorList>
    </citation>
    <scope>FUNCTION</scope>
</reference>
<sequence length="171" mass="17322">MKFIPALIIFVFTIFALTNSETTYSGFKITSADPKNPCSISVPQTDVGTKCIDVCGQGNINIAAVSGETNKYDINGYQATDQCKNSAGQQTLTCGTPVTVGVFSIDCAPDAGATTAAVTTAATTAAVTTAATTAAVTTASTTAAFTTTGTSSTIVIPFALILSLLLSVITL</sequence>
<dbReference type="EMBL" id="AAFI02000089">
    <property type="protein sequence ID" value="EAL64071.1"/>
    <property type="molecule type" value="Genomic_DNA"/>
</dbReference>
<dbReference type="RefSeq" id="XP_637585.1">
    <property type="nucleotide sequence ID" value="XM_632493.1"/>
</dbReference>
<dbReference type="GlyGen" id="Q54LH6">
    <property type="glycosylation" value="1 site"/>
</dbReference>
<dbReference type="PaxDb" id="44689-DDB0237618"/>
<dbReference type="EnsemblProtists" id="EAL64071">
    <property type="protein sequence ID" value="EAL64071"/>
    <property type="gene ID" value="DDB_G0286631"/>
</dbReference>
<dbReference type="GeneID" id="8625725"/>
<dbReference type="KEGG" id="ddi:DDB_G0286631"/>
<dbReference type="dictyBase" id="DDB_G0286631">
    <property type="gene designation" value="ponF"/>
</dbReference>
<dbReference type="VEuPathDB" id="AmoebaDB:DDB_G0286631"/>
<dbReference type="HOGENOM" id="CLU_1565767_0_0_1"/>
<dbReference type="InParanoid" id="Q54LH6"/>
<dbReference type="PhylomeDB" id="Q54LH6"/>
<dbReference type="PRO" id="PR:Q54LH6"/>
<dbReference type="Proteomes" id="UP000002195">
    <property type="component" value="Chromosome 4"/>
</dbReference>
<dbReference type="GO" id="GO:0005886">
    <property type="term" value="C:plasma membrane"/>
    <property type="evidence" value="ECO:0007669"/>
    <property type="project" value="UniProtKB-SubCell"/>
</dbReference>
<dbReference type="GO" id="GO:0098552">
    <property type="term" value="C:side of membrane"/>
    <property type="evidence" value="ECO:0007669"/>
    <property type="project" value="UniProtKB-KW"/>
</dbReference>
<keyword id="KW-1003">Cell membrane</keyword>
<keyword id="KW-0325">Glycoprotein</keyword>
<keyword id="KW-0336">GPI-anchor</keyword>
<keyword id="KW-0449">Lipoprotein</keyword>
<keyword id="KW-0472">Membrane</keyword>
<keyword id="KW-1185">Reference proteome</keyword>
<keyword id="KW-0732">Signal</keyword>